<reference key="1">
    <citation type="journal article" date="2006" name="Appl. Environ. Microbiol.">
        <title>Genome sequence of the chemolithoautotrophic nitrite-oxidizing bacterium Nitrobacter winogradskyi Nb-255.</title>
        <authorList>
            <person name="Starkenburg S.R."/>
            <person name="Chain P.S.G."/>
            <person name="Sayavedra-Soto L.A."/>
            <person name="Hauser L."/>
            <person name="Land M.L."/>
            <person name="Larimer F.W."/>
            <person name="Malfatti S.A."/>
            <person name="Klotz M.G."/>
            <person name="Bottomley P.J."/>
            <person name="Arp D.J."/>
            <person name="Hickey W.J."/>
        </authorList>
    </citation>
    <scope>NUCLEOTIDE SEQUENCE [LARGE SCALE GENOMIC DNA]</scope>
    <source>
        <strain>ATCC 25391 / DSM 10237 / CIP 104748 / NCIMB 11846 / Nb-255</strain>
    </source>
</reference>
<evidence type="ECO:0000255" key="1">
    <source>
        <dbReference type="HAMAP-Rule" id="MF_01808"/>
    </source>
</evidence>
<evidence type="ECO:0000255" key="2">
    <source>
        <dbReference type="PROSITE-ProRule" id="PRU01246"/>
    </source>
</evidence>
<evidence type="ECO:0000255" key="3">
    <source>
        <dbReference type="PROSITE-ProRule" id="PRU01248"/>
    </source>
</evidence>
<accession>Q3SVJ8</accession>
<protein>
    <recommendedName>
        <fullName evidence="1">Tyrosine recombinase XerC</fullName>
    </recommendedName>
</protein>
<sequence length="321" mass="34998">MAKRAEPLPDPACAASDIGQQIVRWLTHLRAERRLSPKTLEAYARDVRQCLMFLGQHWSEQVTLEGFVALEPADIRSFMAARRADDIGGRSLMRSLAGLRSFARFLEREGLGKVGALGAIRAPKVGKSVPKPIHMSAAKRFADASERAGEDREPWIWARDAAVMALLYGSGLRISEALGLKRRDVPPPGAGDVLVVTGKGNKTRMVPVLQNVLALIHEYVAMCPHSLPPEGPIFVGARGGPLRARIIQLVMARMRGALGLPDSATPHALRHSFATHLLSRGGDLRAIQELLGHASLSTTQIYTGIDSERLLDVYRTAHPRA</sequence>
<comment type="function">
    <text evidence="1">Site-specific tyrosine recombinase, which acts by catalyzing the cutting and rejoining of the recombining DNA molecules. The XerC-XerD complex is essential to convert dimers of the bacterial chromosome into monomers to permit their segregation at cell division. It also contributes to the segregational stability of plasmids.</text>
</comment>
<comment type="subunit">
    <text evidence="1">Forms a cyclic heterotetrameric complex composed of two molecules of XerC and two molecules of XerD.</text>
</comment>
<comment type="subcellular location">
    <subcellularLocation>
        <location evidence="1">Cytoplasm</location>
    </subcellularLocation>
</comment>
<comment type="similarity">
    <text evidence="1">Belongs to the 'phage' integrase family. XerC subfamily.</text>
</comment>
<proteinExistence type="inferred from homology"/>
<gene>
    <name evidence="1" type="primary">xerC</name>
    <name type="ordered locus">Nwi_0426</name>
</gene>
<dbReference type="EMBL" id="CP000115">
    <property type="protein sequence ID" value="ABA03693.1"/>
    <property type="molecule type" value="Genomic_DNA"/>
</dbReference>
<dbReference type="RefSeq" id="WP_011313757.1">
    <property type="nucleotide sequence ID" value="NC_007406.1"/>
</dbReference>
<dbReference type="SMR" id="Q3SVJ8"/>
<dbReference type="STRING" id="323098.Nwi_0426"/>
<dbReference type="KEGG" id="nwi:Nwi_0426"/>
<dbReference type="eggNOG" id="COG4974">
    <property type="taxonomic scope" value="Bacteria"/>
</dbReference>
<dbReference type="HOGENOM" id="CLU_027562_9_0_5"/>
<dbReference type="OrthoDB" id="9801717at2"/>
<dbReference type="Proteomes" id="UP000002531">
    <property type="component" value="Chromosome"/>
</dbReference>
<dbReference type="GO" id="GO:0005737">
    <property type="term" value="C:cytoplasm"/>
    <property type="evidence" value="ECO:0007669"/>
    <property type="project" value="UniProtKB-SubCell"/>
</dbReference>
<dbReference type="GO" id="GO:0003677">
    <property type="term" value="F:DNA binding"/>
    <property type="evidence" value="ECO:0007669"/>
    <property type="project" value="UniProtKB-KW"/>
</dbReference>
<dbReference type="GO" id="GO:0009037">
    <property type="term" value="F:tyrosine-based site-specific recombinase activity"/>
    <property type="evidence" value="ECO:0007669"/>
    <property type="project" value="UniProtKB-UniRule"/>
</dbReference>
<dbReference type="GO" id="GO:0051301">
    <property type="term" value="P:cell division"/>
    <property type="evidence" value="ECO:0007669"/>
    <property type="project" value="UniProtKB-KW"/>
</dbReference>
<dbReference type="GO" id="GO:0007059">
    <property type="term" value="P:chromosome segregation"/>
    <property type="evidence" value="ECO:0007669"/>
    <property type="project" value="UniProtKB-UniRule"/>
</dbReference>
<dbReference type="GO" id="GO:0006313">
    <property type="term" value="P:DNA transposition"/>
    <property type="evidence" value="ECO:0007669"/>
    <property type="project" value="UniProtKB-UniRule"/>
</dbReference>
<dbReference type="Gene3D" id="1.10.150.130">
    <property type="match status" value="1"/>
</dbReference>
<dbReference type="Gene3D" id="1.10.443.10">
    <property type="entry name" value="Intergrase catalytic core"/>
    <property type="match status" value="1"/>
</dbReference>
<dbReference type="HAMAP" id="MF_01808">
    <property type="entry name" value="Recomb_XerC_XerD"/>
    <property type="match status" value="1"/>
</dbReference>
<dbReference type="InterPro" id="IPR044068">
    <property type="entry name" value="CB"/>
</dbReference>
<dbReference type="InterPro" id="IPR011010">
    <property type="entry name" value="DNA_brk_join_enz"/>
</dbReference>
<dbReference type="InterPro" id="IPR013762">
    <property type="entry name" value="Integrase-like_cat_sf"/>
</dbReference>
<dbReference type="InterPro" id="IPR002104">
    <property type="entry name" value="Integrase_catalytic"/>
</dbReference>
<dbReference type="InterPro" id="IPR010998">
    <property type="entry name" value="Integrase_recombinase_N"/>
</dbReference>
<dbReference type="InterPro" id="IPR004107">
    <property type="entry name" value="Integrase_SAM-like_N"/>
</dbReference>
<dbReference type="InterPro" id="IPR023009">
    <property type="entry name" value="Tyrosine_recombinase_XerC/XerD"/>
</dbReference>
<dbReference type="InterPro" id="IPR050090">
    <property type="entry name" value="Tyrosine_recombinase_XerCD"/>
</dbReference>
<dbReference type="PANTHER" id="PTHR30349">
    <property type="entry name" value="PHAGE INTEGRASE-RELATED"/>
    <property type="match status" value="1"/>
</dbReference>
<dbReference type="PANTHER" id="PTHR30349:SF90">
    <property type="entry name" value="TYROSINE RECOMBINASE XERD"/>
    <property type="match status" value="1"/>
</dbReference>
<dbReference type="Pfam" id="PF02899">
    <property type="entry name" value="Phage_int_SAM_1"/>
    <property type="match status" value="1"/>
</dbReference>
<dbReference type="Pfam" id="PF00589">
    <property type="entry name" value="Phage_integrase"/>
    <property type="match status" value="1"/>
</dbReference>
<dbReference type="SUPFAM" id="SSF56349">
    <property type="entry name" value="DNA breaking-rejoining enzymes"/>
    <property type="match status" value="1"/>
</dbReference>
<dbReference type="SUPFAM" id="SSF47823">
    <property type="entry name" value="lambda integrase-like, N-terminal domain"/>
    <property type="match status" value="1"/>
</dbReference>
<dbReference type="PROSITE" id="PS51900">
    <property type="entry name" value="CB"/>
    <property type="match status" value="1"/>
</dbReference>
<dbReference type="PROSITE" id="PS51898">
    <property type="entry name" value="TYR_RECOMBINASE"/>
    <property type="match status" value="1"/>
</dbReference>
<feature type="chain" id="PRO_1000073667" description="Tyrosine recombinase XerC">
    <location>
        <begin position="1"/>
        <end position="321"/>
    </location>
</feature>
<feature type="domain" description="Core-binding (CB)" evidence="3">
    <location>
        <begin position="16"/>
        <end position="107"/>
    </location>
</feature>
<feature type="domain" description="Tyr recombinase" evidence="2">
    <location>
        <begin position="128"/>
        <end position="315"/>
    </location>
</feature>
<feature type="active site" evidence="1">
    <location>
        <position position="173"/>
    </location>
</feature>
<feature type="active site" evidence="1">
    <location>
        <position position="199"/>
    </location>
</feature>
<feature type="active site" evidence="1">
    <location>
        <position position="267"/>
    </location>
</feature>
<feature type="active site" evidence="1">
    <location>
        <position position="270"/>
    </location>
</feature>
<feature type="active site" evidence="1">
    <location>
        <position position="293"/>
    </location>
</feature>
<feature type="active site" description="O-(3'-phospho-DNA)-tyrosine intermediate" evidence="1">
    <location>
        <position position="302"/>
    </location>
</feature>
<keyword id="KW-0131">Cell cycle</keyword>
<keyword id="KW-0132">Cell division</keyword>
<keyword id="KW-0159">Chromosome partition</keyword>
<keyword id="KW-0963">Cytoplasm</keyword>
<keyword id="KW-0229">DNA integration</keyword>
<keyword id="KW-0233">DNA recombination</keyword>
<keyword id="KW-0238">DNA-binding</keyword>
<keyword id="KW-1185">Reference proteome</keyword>
<name>XERC_NITWN</name>
<organism>
    <name type="scientific">Nitrobacter winogradskyi (strain ATCC 25391 / DSM 10237 / CIP 104748 / NCIMB 11846 / Nb-255)</name>
    <dbReference type="NCBI Taxonomy" id="323098"/>
    <lineage>
        <taxon>Bacteria</taxon>
        <taxon>Pseudomonadati</taxon>
        <taxon>Pseudomonadota</taxon>
        <taxon>Alphaproteobacteria</taxon>
        <taxon>Hyphomicrobiales</taxon>
        <taxon>Nitrobacteraceae</taxon>
        <taxon>Nitrobacter</taxon>
    </lineage>
</organism>